<feature type="chain" id="PRO_1000128570" description="Small ribosomal subunit protein uS14">
    <location>
        <begin position="1"/>
        <end position="101"/>
    </location>
</feature>
<name>RS14_SHEB5</name>
<accession>A3DA59</accession>
<comment type="function">
    <text evidence="1">Binds 16S rRNA, required for the assembly of 30S particles and may also be responsible for determining the conformation of the 16S rRNA at the A site.</text>
</comment>
<comment type="subunit">
    <text evidence="1">Part of the 30S ribosomal subunit. Contacts proteins S3 and S10.</text>
</comment>
<comment type="similarity">
    <text evidence="1">Belongs to the universal ribosomal protein uS14 family.</text>
</comment>
<evidence type="ECO:0000255" key="1">
    <source>
        <dbReference type="HAMAP-Rule" id="MF_00537"/>
    </source>
</evidence>
<evidence type="ECO:0000305" key="2"/>
<proteinExistence type="inferred from homology"/>
<protein>
    <recommendedName>
        <fullName evidence="1">Small ribosomal subunit protein uS14</fullName>
    </recommendedName>
    <alternativeName>
        <fullName evidence="2">30S ribosomal protein S14</fullName>
    </alternativeName>
</protein>
<dbReference type="EMBL" id="CP000563">
    <property type="protein sequence ID" value="ABN63622.1"/>
    <property type="molecule type" value="Genomic_DNA"/>
</dbReference>
<dbReference type="RefSeq" id="WP_006083587.1">
    <property type="nucleotide sequence ID" value="NC_009052.1"/>
</dbReference>
<dbReference type="SMR" id="A3DA59"/>
<dbReference type="STRING" id="325240.Sbal_4157"/>
<dbReference type="GeneID" id="11770570"/>
<dbReference type="KEGG" id="sbl:Sbal_4157"/>
<dbReference type="HOGENOM" id="CLU_139869_0_1_6"/>
<dbReference type="OrthoDB" id="9810484at2"/>
<dbReference type="Proteomes" id="UP000001557">
    <property type="component" value="Chromosome"/>
</dbReference>
<dbReference type="GO" id="GO:0005737">
    <property type="term" value="C:cytoplasm"/>
    <property type="evidence" value="ECO:0007669"/>
    <property type="project" value="UniProtKB-ARBA"/>
</dbReference>
<dbReference type="GO" id="GO:0015935">
    <property type="term" value="C:small ribosomal subunit"/>
    <property type="evidence" value="ECO:0007669"/>
    <property type="project" value="TreeGrafter"/>
</dbReference>
<dbReference type="GO" id="GO:0019843">
    <property type="term" value="F:rRNA binding"/>
    <property type="evidence" value="ECO:0007669"/>
    <property type="project" value="UniProtKB-UniRule"/>
</dbReference>
<dbReference type="GO" id="GO:0003735">
    <property type="term" value="F:structural constituent of ribosome"/>
    <property type="evidence" value="ECO:0007669"/>
    <property type="project" value="InterPro"/>
</dbReference>
<dbReference type="GO" id="GO:0006412">
    <property type="term" value="P:translation"/>
    <property type="evidence" value="ECO:0007669"/>
    <property type="project" value="UniProtKB-UniRule"/>
</dbReference>
<dbReference type="FunFam" id="1.10.287.1480:FF:000001">
    <property type="entry name" value="30S ribosomal protein S14"/>
    <property type="match status" value="1"/>
</dbReference>
<dbReference type="Gene3D" id="1.10.287.1480">
    <property type="match status" value="1"/>
</dbReference>
<dbReference type="HAMAP" id="MF_00537">
    <property type="entry name" value="Ribosomal_uS14_1"/>
    <property type="match status" value="1"/>
</dbReference>
<dbReference type="InterPro" id="IPR001209">
    <property type="entry name" value="Ribosomal_uS14"/>
</dbReference>
<dbReference type="InterPro" id="IPR023036">
    <property type="entry name" value="Ribosomal_uS14_bac/plastid"/>
</dbReference>
<dbReference type="InterPro" id="IPR018271">
    <property type="entry name" value="Ribosomal_uS14_CS"/>
</dbReference>
<dbReference type="NCBIfam" id="NF006477">
    <property type="entry name" value="PRK08881.1"/>
    <property type="match status" value="1"/>
</dbReference>
<dbReference type="PANTHER" id="PTHR19836">
    <property type="entry name" value="30S RIBOSOMAL PROTEIN S14"/>
    <property type="match status" value="1"/>
</dbReference>
<dbReference type="PANTHER" id="PTHR19836:SF19">
    <property type="entry name" value="SMALL RIBOSOMAL SUBUNIT PROTEIN US14M"/>
    <property type="match status" value="1"/>
</dbReference>
<dbReference type="Pfam" id="PF00253">
    <property type="entry name" value="Ribosomal_S14"/>
    <property type="match status" value="1"/>
</dbReference>
<dbReference type="SUPFAM" id="SSF57716">
    <property type="entry name" value="Glucocorticoid receptor-like (DNA-binding domain)"/>
    <property type="match status" value="1"/>
</dbReference>
<dbReference type="PROSITE" id="PS00527">
    <property type="entry name" value="RIBOSOMAL_S14"/>
    <property type="match status" value="1"/>
</dbReference>
<organism>
    <name type="scientific">Shewanella baltica (strain OS155 / ATCC BAA-1091)</name>
    <dbReference type="NCBI Taxonomy" id="325240"/>
    <lineage>
        <taxon>Bacteria</taxon>
        <taxon>Pseudomonadati</taxon>
        <taxon>Pseudomonadota</taxon>
        <taxon>Gammaproteobacteria</taxon>
        <taxon>Alteromonadales</taxon>
        <taxon>Shewanellaceae</taxon>
        <taxon>Shewanella</taxon>
    </lineage>
</organism>
<gene>
    <name evidence="1" type="primary">rpsN</name>
    <name type="ordered locus">Sbal_4157</name>
</gene>
<sequence>MAKTSMKAREAKRAQLVAKYAEKRAALKTIIASPASSDEDRWDAVLKLQALPRDSSAARQRNRCNQTGRPHGFLRKFGLSRIKLREATMRGEVPGLRKASW</sequence>
<keyword id="KW-1185">Reference proteome</keyword>
<keyword id="KW-0687">Ribonucleoprotein</keyword>
<keyword id="KW-0689">Ribosomal protein</keyword>
<keyword id="KW-0694">RNA-binding</keyword>
<keyword id="KW-0699">rRNA-binding</keyword>
<reference key="1">
    <citation type="submission" date="2007-02" db="EMBL/GenBank/DDBJ databases">
        <title>Complete sequence of chromosome of Shewanella baltica OS155.</title>
        <authorList>
            <consortium name="US DOE Joint Genome Institute"/>
            <person name="Copeland A."/>
            <person name="Lucas S."/>
            <person name="Lapidus A."/>
            <person name="Barry K."/>
            <person name="Detter J.C."/>
            <person name="Glavina del Rio T."/>
            <person name="Hammon N."/>
            <person name="Israni S."/>
            <person name="Dalin E."/>
            <person name="Tice H."/>
            <person name="Pitluck S."/>
            <person name="Sims D.R."/>
            <person name="Brettin T."/>
            <person name="Bruce D."/>
            <person name="Han C."/>
            <person name="Tapia R."/>
            <person name="Brainard J."/>
            <person name="Schmutz J."/>
            <person name="Larimer F."/>
            <person name="Land M."/>
            <person name="Hauser L."/>
            <person name="Kyrpides N."/>
            <person name="Mikhailova N."/>
            <person name="Brettar I."/>
            <person name="Klappenbach J."/>
            <person name="Konstantinidis K."/>
            <person name="Rodrigues J."/>
            <person name="Tiedje J."/>
            <person name="Richardson P."/>
        </authorList>
    </citation>
    <scope>NUCLEOTIDE SEQUENCE [LARGE SCALE GENOMIC DNA]</scope>
    <source>
        <strain>OS155 / ATCC BAA-1091</strain>
    </source>
</reference>